<proteinExistence type="inferred from homology"/>
<reference key="1">
    <citation type="journal article" date="2002" name="J. Gen. Virol.">
        <title>The dominant hepatitis B virus genotype identified in Tibet is a C/D hybrid.</title>
        <authorList>
            <person name="Cui C."/>
            <person name="Shi J."/>
            <person name="Hui L."/>
            <person name="Xi H."/>
            <person name="Zhuoma X."/>
            <person name="Quni X."/>
            <person name="Tsedan X."/>
            <person name="Hu G."/>
        </authorList>
    </citation>
    <scope>NUCLEOTIDE SEQUENCE [GENOMIC DNA]</scope>
</reference>
<reference key="2">
    <citation type="journal article" date="2004" name="J. Virol.">
        <title>The enigmatic X gene of hepatitis B virus.</title>
        <authorList>
            <person name="Bouchard M.J."/>
            <person name="Schneider R.J."/>
        </authorList>
    </citation>
    <scope>REVIEW</scope>
</reference>
<reference key="3">
    <citation type="journal article" date="2006" name="Cancer Sci.">
        <title>Molecular functions and biological roles of hepatitis B virus x protein.</title>
        <authorList>
            <person name="Tang H."/>
            <person name="Oishi N."/>
            <person name="Kaneko S."/>
            <person name="Murakami S."/>
        </authorList>
    </citation>
    <scope>REVIEW</scope>
</reference>
<feature type="chain" id="PRO_0000319907" description="Protein X">
    <location>
        <begin position="1"/>
        <end position="154"/>
    </location>
</feature>
<feature type="region of interest" description="Mitochondrial targeting sequence" evidence="1">
    <location>
        <begin position="68"/>
        <end position="117"/>
    </location>
</feature>
<accession>Q913A9</accession>
<keyword id="KW-1074">Activation of host NF-kappa-B by virus</keyword>
<keyword id="KW-0010">Activator</keyword>
<keyword id="KW-0053">Apoptosis</keyword>
<keyword id="KW-1035">Host cytoplasm</keyword>
<keyword id="KW-1079">Host G2/M cell cycle arrest by virus</keyword>
<keyword id="KW-1045">Host mitochondrion</keyword>
<keyword id="KW-1048">Host nucleus</keyword>
<keyword id="KW-0945">Host-virus interaction</keyword>
<keyword id="KW-1121">Modulation of host cell cycle by virus</keyword>
<keyword id="KW-0804">Transcription</keyword>
<keyword id="KW-0805">Transcription regulation</keyword>
<name>X_HBVC7</name>
<sequence>MAARLCCQLDPARDVLCLRPVGAESRGRPFSGPLGTLPSPSSSAVPADHGAHLSLRGLPVCAFSSAGPCALRFTFARRMETTVNAHQVLPKVLHKRTLGLSAMSTTDLEAYFKDCVFKDWEELGEEIRLKVFVLGGCRHKLVCSPAPCNFFTSA</sequence>
<organism>
    <name type="scientific">Hepatitis B virus genotype C subtype ayw (isolate China/Tibet127/2002)</name>
    <name type="common">HBV-C</name>
    <dbReference type="NCBI Taxonomy" id="489469"/>
    <lineage>
        <taxon>Viruses</taxon>
        <taxon>Riboviria</taxon>
        <taxon>Pararnavirae</taxon>
        <taxon>Artverviricota</taxon>
        <taxon>Revtraviricetes</taxon>
        <taxon>Blubervirales</taxon>
        <taxon>Hepadnaviridae</taxon>
        <taxon>Orthohepadnavirus</taxon>
        <taxon>Hepatitis B virus</taxon>
        <taxon>hepatitis B virus genotype C</taxon>
    </lineage>
</organism>
<dbReference type="EMBL" id="AY057948">
    <property type="protein sequence ID" value="AAL25949.1"/>
    <property type="molecule type" value="Genomic_DNA"/>
</dbReference>
<dbReference type="SMR" id="Q913A9"/>
<dbReference type="Proteomes" id="UP000007925">
    <property type="component" value="Genome"/>
</dbReference>
<dbReference type="GO" id="GO:0033650">
    <property type="term" value="C:host cell mitochondrion"/>
    <property type="evidence" value="ECO:0007669"/>
    <property type="project" value="UniProtKB-SubCell"/>
</dbReference>
<dbReference type="GO" id="GO:0042025">
    <property type="term" value="C:host cell nucleus"/>
    <property type="evidence" value="ECO:0007669"/>
    <property type="project" value="UniProtKB-SubCell"/>
</dbReference>
<dbReference type="GO" id="GO:0006351">
    <property type="term" value="P:DNA-templated transcription"/>
    <property type="evidence" value="ECO:0007669"/>
    <property type="project" value="UniProtKB-UniRule"/>
</dbReference>
<dbReference type="GO" id="GO:0085033">
    <property type="term" value="P:symbiont-mediated activation of host NF-kappaB cascade"/>
    <property type="evidence" value="ECO:0007669"/>
    <property type="project" value="UniProtKB-UniRule"/>
</dbReference>
<dbReference type="GO" id="GO:0039592">
    <property type="term" value="P:symbiont-mediated arrest of host cell cycle during G2/M transition"/>
    <property type="evidence" value="ECO:0007669"/>
    <property type="project" value="UniProtKB-UniRule"/>
</dbReference>
<dbReference type="GO" id="GO:0019079">
    <property type="term" value="P:viral genome replication"/>
    <property type="evidence" value="ECO:0007669"/>
    <property type="project" value="UniProtKB-UniRule"/>
</dbReference>
<dbReference type="HAMAP" id="MF_04074">
    <property type="entry name" value="HBV_X"/>
    <property type="match status" value="1"/>
</dbReference>
<dbReference type="InterPro" id="IPR000236">
    <property type="entry name" value="Transactivation_prot_X"/>
</dbReference>
<dbReference type="Pfam" id="PF00739">
    <property type="entry name" value="X"/>
    <property type="match status" value="1"/>
</dbReference>
<protein>
    <recommendedName>
        <fullName evidence="1">Protein X</fullName>
    </recommendedName>
    <alternativeName>
        <fullName evidence="1">HBx</fullName>
    </alternativeName>
    <alternativeName>
        <fullName evidence="1">Peptide X</fullName>
    </alternativeName>
    <alternativeName>
        <fullName evidence="1">pX</fullName>
    </alternativeName>
</protein>
<comment type="function">
    <text evidence="1">Multifunctional protein that plays a role in silencing host antiviral defenses and promoting viral transcription. Does not seem to be essential for HBV infection. May be directly involved in development of cirrhosis and liver cancer (hepatocellular carcinoma). Most of cytosolic activities involve modulation of cytosolic calcium. The effect on apoptosis is controversial depending on the cell types in which the studies have been conducted. May induce apoptosis by localizing in mitochondria and causing loss of mitochondrial membrane potential. May also modulate apoptosis by binding host CFLAR, a key regulator of the death-inducing signaling complex (DISC). Promotes viral transcription by using the host E3 ubiquitin ligase DDB1 to target the SMC5-SMC6 complex to proteasomal degradation. This host complex would otherwise bind to viral episomal DNA, and prevents its transcription. Moderately stimulates transcription of many different viral and cellular transcription elements. Promoters and enhancers stimulated by HBx contain DNA binding sites for NF-kappa-B, AP-1, AP-2, c-EBP, ATF/CREB, or the calcium-activated factor NF-AT.</text>
</comment>
<comment type="subunit">
    <text evidence="1">May form homodimer. May interact with host CEBPA, CFLAR, CREB1, DDB1, E4F1, HBXIP, HSPD1/HSP60, NFKBIA, POLR2E and SMAD4. Interacts with host SMC5-SMC6 complex and induces its degradation. Interacts with host TRPC4AP; leading to prevent ubiquitination of TRPC4AP. Interacts with host PLSCR1; this interaction promotes ubiquitination and degradation of HBx and impairs HBx-mediated cell proliferation.</text>
</comment>
<comment type="subcellular location">
    <subcellularLocation>
        <location evidence="1">Host cytoplasm</location>
    </subcellularLocation>
    <subcellularLocation>
        <location evidence="1">Host nucleus</location>
    </subcellularLocation>
    <subcellularLocation>
        <location evidence="1">Host mitochondrion</location>
    </subcellularLocation>
    <text evidence="1">Mainly cytoplasmic as only a fraction is detected in the nucleus. In cytoplasm, a minor fraction associates with mitochondria or proteasomes.</text>
</comment>
<comment type="PTM">
    <text evidence="1">A fraction may be phosphorylated in insect cells and HepG2 cells, a human hepatoblastoma cell line. Phosphorylated in vitro by host protein kinase C or mitogen-activated protein kinase. N-acetylated in insect cells.</text>
</comment>
<comment type="similarity">
    <text evidence="1">Belongs to the orthohepadnavirus protein X family.</text>
</comment>
<comment type="caution">
    <text>Transcriptional activities should be taken with a grain of salt. As of 2007, all studies demonstrating in vivo interaction between protein X and transcriptional components were performed with significant overexpression of both proteins and in the absence of viral infection.</text>
</comment>
<evidence type="ECO:0000255" key="1">
    <source>
        <dbReference type="HAMAP-Rule" id="MF_04074"/>
    </source>
</evidence>
<gene>
    <name evidence="1" type="primary">X</name>
</gene>
<organismHost>
    <name type="scientific">Homo sapiens</name>
    <name type="common">Human</name>
    <dbReference type="NCBI Taxonomy" id="9606"/>
</organismHost>
<organismHost>
    <name type="scientific">Pan troglodytes</name>
    <name type="common">Chimpanzee</name>
    <dbReference type="NCBI Taxonomy" id="9598"/>
</organismHost>